<name>PRMA_ACET2</name>
<evidence type="ECO:0000255" key="1">
    <source>
        <dbReference type="HAMAP-Rule" id="MF_00735"/>
    </source>
</evidence>
<keyword id="KW-0963">Cytoplasm</keyword>
<keyword id="KW-0489">Methyltransferase</keyword>
<keyword id="KW-1185">Reference proteome</keyword>
<keyword id="KW-0949">S-adenosyl-L-methionine</keyword>
<keyword id="KW-0808">Transferase</keyword>
<protein>
    <recommendedName>
        <fullName evidence="1">Ribosomal protein L11 methyltransferase</fullName>
        <shortName evidence="1">L11 Mtase</shortName>
        <ecNumber evidence="1">2.1.1.-</ecNumber>
    </recommendedName>
</protein>
<sequence>MKWIEIKIKTTEEACDAISYMLTSIGAGGVAIEDPNEIRRETQKSNSIDYVDDEFLNSLGEDVVVKAYFPGETNVPELVSLIKEKLAFIGTFLNVGEGYCGYAEMDEEDWSNSWKKYYKPLHLTDRLIVKPSWENYDNKDGEIIIEMNPGMAFGTGTHETTKMCAVLLDKYVKDGCRVIDVGCGTGILSIIASKLGAAEVTAVDIDEVAVKVAKENLELNKVDNVRVFKGVLDDIEKEKRDIVVANIIANVIMDISSRVPYYLKKDGLFIASGIIKERKQEVLDECLRKGFECVEIIEMGEWVAIVLRCLDSL</sequence>
<comment type="function">
    <text evidence="1">Methylates ribosomal protein L11.</text>
</comment>
<comment type="catalytic activity">
    <reaction evidence="1">
        <text>L-lysyl-[protein] + 3 S-adenosyl-L-methionine = N(6),N(6),N(6)-trimethyl-L-lysyl-[protein] + 3 S-adenosyl-L-homocysteine + 3 H(+)</text>
        <dbReference type="Rhea" id="RHEA:54192"/>
        <dbReference type="Rhea" id="RHEA-COMP:9752"/>
        <dbReference type="Rhea" id="RHEA-COMP:13826"/>
        <dbReference type="ChEBI" id="CHEBI:15378"/>
        <dbReference type="ChEBI" id="CHEBI:29969"/>
        <dbReference type="ChEBI" id="CHEBI:57856"/>
        <dbReference type="ChEBI" id="CHEBI:59789"/>
        <dbReference type="ChEBI" id="CHEBI:61961"/>
    </reaction>
</comment>
<comment type="subcellular location">
    <subcellularLocation>
        <location evidence="1">Cytoplasm</location>
    </subcellularLocation>
</comment>
<comment type="similarity">
    <text evidence="1">Belongs to the methyltransferase superfamily. PrmA family.</text>
</comment>
<gene>
    <name evidence="1" type="primary">prmA</name>
    <name type="ordered locus">Cthe_1320</name>
</gene>
<accession>A3DF23</accession>
<feature type="chain" id="PRO_1000046015" description="Ribosomal protein L11 methyltransferase">
    <location>
        <begin position="1"/>
        <end position="313"/>
    </location>
</feature>
<feature type="binding site" evidence="1">
    <location>
        <position position="161"/>
    </location>
    <ligand>
        <name>S-adenosyl-L-methionine</name>
        <dbReference type="ChEBI" id="CHEBI:59789"/>
    </ligand>
</feature>
<feature type="binding site" evidence="1">
    <location>
        <position position="182"/>
    </location>
    <ligand>
        <name>S-adenosyl-L-methionine</name>
        <dbReference type="ChEBI" id="CHEBI:59789"/>
    </ligand>
</feature>
<feature type="binding site" evidence="1">
    <location>
        <position position="204"/>
    </location>
    <ligand>
        <name>S-adenosyl-L-methionine</name>
        <dbReference type="ChEBI" id="CHEBI:59789"/>
    </ligand>
</feature>
<feature type="binding site" evidence="1">
    <location>
        <position position="246"/>
    </location>
    <ligand>
        <name>S-adenosyl-L-methionine</name>
        <dbReference type="ChEBI" id="CHEBI:59789"/>
    </ligand>
</feature>
<dbReference type="EC" id="2.1.1.-" evidence="1"/>
<dbReference type="EMBL" id="CP000568">
    <property type="protein sequence ID" value="ABN52552.1"/>
    <property type="molecule type" value="Genomic_DNA"/>
</dbReference>
<dbReference type="RefSeq" id="WP_003517014.1">
    <property type="nucleotide sequence ID" value="NC_009012.1"/>
</dbReference>
<dbReference type="SMR" id="A3DF23"/>
<dbReference type="STRING" id="203119.Cthe_1320"/>
<dbReference type="DNASU" id="4809460"/>
<dbReference type="GeneID" id="35805689"/>
<dbReference type="KEGG" id="cth:Cthe_1320"/>
<dbReference type="eggNOG" id="COG2264">
    <property type="taxonomic scope" value="Bacteria"/>
</dbReference>
<dbReference type="HOGENOM" id="CLU_049382_0_1_9"/>
<dbReference type="OrthoDB" id="9785995at2"/>
<dbReference type="Proteomes" id="UP000002145">
    <property type="component" value="Chromosome"/>
</dbReference>
<dbReference type="GO" id="GO:0005737">
    <property type="term" value="C:cytoplasm"/>
    <property type="evidence" value="ECO:0007669"/>
    <property type="project" value="UniProtKB-SubCell"/>
</dbReference>
<dbReference type="GO" id="GO:0016279">
    <property type="term" value="F:protein-lysine N-methyltransferase activity"/>
    <property type="evidence" value="ECO:0007669"/>
    <property type="project" value="RHEA"/>
</dbReference>
<dbReference type="GO" id="GO:0032259">
    <property type="term" value="P:methylation"/>
    <property type="evidence" value="ECO:0007669"/>
    <property type="project" value="UniProtKB-KW"/>
</dbReference>
<dbReference type="CDD" id="cd02440">
    <property type="entry name" value="AdoMet_MTases"/>
    <property type="match status" value="1"/>
</dbReference>
<dbReference type="Gene3D" id="3.40.50.150">
    <property type="entry name" value="Vaccinia Virus protein VP39"/>
    <property type="match status" value="1"/>
</dbReference>
<dbReference type="HAMAP" id="MF_00735">
    <property type="entry name" value="Methyltr_PrmA"/>
    <property type="match status" value="1"/>
</dbReference>
<dbReference type="InterPro" id="IPR050078">
    <property type="entry name" value="Ribosomal_L11_MeTrfase_PrmA"/>
</dbReference>
<dbReference type="InterPro" id="IPR004498">
    <property type="entry name" value="Ribosomal_PrmA_MeTrfase"/>
</dbReference>
<dbReference type="InterPro" id="IPR029063">
    <property type="entry name" value="SAM-dependent_MTases_sf"/>
</dbReference>
<dbReference type="NCBIfam" id="TIGR00406">
    <property type="entry name" value="prmA"/>
    <property type="match status" value="1"/>
</dbReference>
<dbReference type="PANTHER" id="PTHR43648">
    <property type="entry name" value="ELECTRON TRANSFER FLAVOPROTEIN BETA SUBUNIT LYSINE METHYLTRANSFERASE"/>
    <property type="match status" value="1"/>
</dbReference>
<dbReference type="PANTHER" id="PTHR43648:SF1">
    <property type="entry name" value="ELECTRON TRANSFER FLAVOPROTEIN BETA SUBUNIT LYSINE METHYLTRANSFERASE"/>
    <property type="match status" value="1"/>
</dbReference>
<dbReference type="Pfam" id="PF06325">
    <property type="entry name" value="PrmA"/>
    <property type="match status" value="1"/>
</dbReference>
<dbReference type="PIRSF" id="PIRSF000401">
    <property type="entry name" value="RPL11_MTase"/>
    <property type="match status" value="1"/>
</dbReference>
<dbReference type="SUPFAM" id="SSF53335">
    <property type="entry name" value="S-adenosyl-L-methionine-dependent methyltransferases"/>
    <property type="match status" value="1"/>
</dbReference>
<reference key="1">
    <citation type="submission" date="2007-02" db="EMBL/GenBank/DDBJ databases">
        <title>Complete sequence of Clostridium thermocellum ATCC 27405.</title>
        <authorList>
            <consortium name="US DOE Joint Genome Institute"/>
            <person name="Copeland A."/>
            <person name="Lucas S."/>
            <person name="Lapidus A."/>
            <person name="Barry K."/>
            <person name="Detter J.C."/>
            <person name="Glavina del Rio T."/>
            <person name="Hammon N."/>
            <person name="Israni S."/>
            <person name="Dalin E."/>
            <person name="Tice H."/>
            <person name="Pitluck S."/>
            <person name="Chertkov O."/>
            <person name="Brettin T."/>
            <person name="Bruce D."/>
            <person name="Han C."/>
            <person name="Tapia R."/>
            <person name="Gilna P."/>
            <person name="Schmutz J."/>
            <person name="Larimer F."/>
            <person name="Land M."/>
            <person name="Hauser L."/>
            <person name="Kyrpides N."/>
            <person name="Mikhailova N."/>
            <person name="Wu J.H.D."/>
            <person name="Newcomb M."/>
            <person name="Richardson P."/>
        </authorList>
    </citation>
    <scope>NUCLEOTIDE SEQUENCE [LARGE SCALE GENOMIC DNA]</scope>
    <source>
        <strain>ATCC 27405 / DSM 1237 / JCM 9322 / NBRC 103400 / NCIMB 10682 / NRRL B-4536 / VPI 7372</strain>
    </source>
</reference>
<organism>
    <name type="scientific">Acetivibrio thermocellus (strain ATCC 27405 / DSM 1237 / JCM 9322 / NBRC 103400 / NCIMB 10682 / NRRL B-4536 / VPI 7372)</name>
    <name type="common">Clostridium thermocellum</name>
    <dbReference type="NCBI Taxonomy" id="203119"/>
    <lineage>
        <taxon>Bacteria</taxon>
        <taxon>Bacillati</taxon>
        <taxon>Bacillota</taxon>
        <taxon>Clostridia</taxon>
        <taxon>Eubacteriales</taxon>
        <taxon>Oscillospiraceae</taxon>
        <taxon>Acetivibrio</taxon>
    </lineage>
</organism>
<proteinExistence type="inferred from homology"/>